<accession>A1AXP4</accession>
<proteinExistence type="inferred from homology"/>
<reference key="1">
    <citation type="journal article" date="2007" name="Science">
        <title>The Calyptogena magnifica chemoautotrophic symbiont genome.</title>
        <authorList>
            <person name="Newton I.L.G."/>
            <person name="Woyke T."/>
            <person name="Auchtung T.A."/>
            <person name="Dilly G.F."/>
            <person name="Dutton R.J."/>
            <person name="Fisher M.C."/>
            <person name="Fontanez K.M."/>
            <person name="Lau E."/>
            <person name="Stewart F.J."/>
            <person name="Richardson P.M."/>
            <person name="Barry K.W."/>
            <person name="Saunders E."/>
            <person name="Detter J.C."/>
            <person name="Wu D."/>
            <person name="Eisen J.A."/>
            <person name="Cavanaugh C.M."/>
        </authorList>
    </citation>
    <scope>NUCLEOTIDE SEQUENCE [LARGE SCALE GENOMIC DNA]</scope>
</reference>
<organism>
    <name type="scientific">Ruthia magnifica subsp. Calyptogena magnifica</name>
    <dbReference type="NCBI Taxonomy" id="413404"/>
    <lineage>
        <taxon>Bacteria</taxon>
        <taxon>Pseudomonadati</taxon>
        <taxon>Pseudomonadota</taxon>
        <taxon>Gammaproteobacteria</taxon>
        <taxon>Candidatus Pseudothioglobaceae</taxon>
        <taxon>Candidatus Ruthturnera</taxon>
    </lineage>
</organism>
<comment type="function">
    <text evidence="1">Catalyzes the transfer of a ribosyl phosphate group from 5-phosphoribose 1-diphosphate to orotate, leading to the formation of orotidine monophosphate (OMP).</text>
</comment>
<comment type="catalytic activity">
    <reaction evidence="1">
        <text>orotidine 5'-phosphate + diphosphate = orotate + 5-phospho-alpha-D-ribose 1-diphosphate</text>
        <dbReference type="Rhea" id="RHEA:10380"/>
        <dbReference type="ChEBI" id="CHEBI:30839"/>
        <dbReference type="ChEBI" id="CHEBI:33019"/>
        <dbReference type="ChEBI" id="CHEBI:57538"/>
        <dbReference type="ChEBI" id="CHEBI:58017"/>
        <dbReference type="EC" id="2.4.2.10"/>
    </reaction>
</comment>
<comment type="cofactor">
    <cofactor evidence="1">
        <name>Mg(2+)</name>
        <dbReference type="ChEBI" id="CHEBI:18420"/>
    </cofactor>
</comment>
<comment type="pathway">
    <text evidence="1">Pyrimidine metabolism; UMP biosynthesis via de novo pathway; UMP from orotate: step 1/2.</text>
</comment>
<comment type="subunit">
    <text evidence="1">Homodimer.</text>
</comment>
<comment type="similarity">
    <text evidence="1">Belongs to the purine/pyrimidine phosphoribosyltransferase family. PyrE subfamily.</text>
</comment>
<keyword id="KW-0328">Glycosyltransferase</keyword>
<keyword id="KW-0460">Magnesium</keyword>
<keyword id="KW-0665">Pyrimidine biosynthesis</keyword>
<keyword id="KW-0808">Transferase</keyword>
<name>PYRE_RUTMC</name>
<dbReference type="EC" id="2.4.2.10" evidence="1"/>
<dbReference type="EMBL" id="CP000488">
    <property type="protein sequence ID" value="ABL02701.1"/>
    <property type="molecule type" value="Genomic_DNA"/>
</dbReference>
<dbReference type="RefSeq" id="WP_011738326.1">
    <property type="nucleotide sequence ID" value="NC_008610.1"/>
</dbReference>
<dbReference type="SMR" id="A1AXP4"/>
<dbReference type="STRING" id="413404.Rmag_0995"/>
<dbReference type="KEGG" id="rma:Rmag_0995"/>
<dbReference type="eggNOG" id="COG0461">
    <property type="taxonomic scope" value="Bacteria"/>
</dbReference>
<dbReference type="HOGENOM" id="CLU_074878_0_1_6"/>
<dbReference type="OrthoDB" id="9779060at2"/>
<dbReference type="UniPathway" id="UPA00070">
    <property type="reaction ID" value="UER00119"/>
</dbReference>
<dbReference type="Proteomes" id="UP000002587">
    <property type="component" value="Chromosome"/>
</dbReference>
<dbReference type="GO" id="GO:0005737">
    <property type="term" value="C:cytoplasm"/>
    <property type="evidence" value="ECO:0007669"/>
    <property type="project" value="TreeGrafter"/>
</dbReference>
<dbReference type="GO" id="GO:0000287">
    <property type="term" value="F:magnesium ion binding"/>
    <property type="evidence" value="ECO:0007669"/>
    <property type="project" value="UniProtKB-UniRule"/>
</dbReference>
<dbReference type="GO" id="GO:0004588">
    <property type="term" value="F:orotate phosphoribosyltransferase activity"/>
    <property type="evidence" value="ECO:0007669"/>
    <property type="project" value="UniProtKB-UniRule"/>
</dbReference>
<dbReference type="GO" id="GO:0006207">
    <property type="term" value="P:'de novo' pyrimidine nucleobase biosynthetic process"/>
    <property type="evidence" value="ECO:0007669"/>
    <property type="project" value="TreeGrafter"/>
</dbReference>
<dbReference type="GO" id="GO:0044205">
    <property type="term" value="P:'de novo' UMP biosynthetic process"/>
    <property type="evidence" value="ECO:0007669"/>
    <property type="project" value="UniProtKB-UniRule"/>
</dbReference>
<dbReference type="GO" id="GO:0046132">
    <property type="term" value="P:pyrimidine ribonucleoside biosynthetic process"/>
    <property type="evidence" value="ECO:0007669"/>
    <property type="project" value="TreeGrafter"/>
</dbReference>
<dbReference type="CDD" id="cd06223">
    <property type="entry name" value="PRTases_typeI"/>
    <property type="match status" value="1"/>
</dbReference>
<dbReference type="FunFam" id="3.40.50.2020:FF:000008">
    <property type="entry name" value="Orotate phosphoribosyltransferase"/>
    <property type="match status" value="1"/>
</dbReference>
<dbReference type="Gene3D" id="3.40.50.2020">
    <property type="match status" value="1"/>
</dbReference>
<dbReference type="HAMAP" id="MF_01208">
    <property type="entry name" value="PyrE"/>
    <property type="match status" value="1"/>
</dbReference>
<dbReference type="InterPro" id="IPR023031">
    <property type="entry name" value="OPRT"/>
</dbReference>
<dbReference type="InterPro" id="IPR004467">
    <property type="entry name" value="Or_phspho_trans_dom"/>
</dbReference>
<dbReference type="InterPro" id="IPR000836">
    <property type="entry name" value="PRibTrfase_dom"/>
</dbReference>
<dbReference type="InterPro" id="IPR029057">
    <property type="entry name" value="PRTase-like"/>
</dbReference>
<dbReference type="NCBIfam" id="TIGR00336">
    <property type="entry name" value="pyrE"/>
    <property type="match status" value="1"/>
</dbReference>
<dbReference type="PANTHER" id="PTHR46683">
    <property type="entry name" value="OROTATE PHOSPHORIBOSYLTRANSFERASE 1-RELATED"/>
    <property type="match status" value="1"/>
</dbReference>
<dbReference type="PANTHER" id="PTHR46683:SF1">
    <property type="entry name" value="OROTATE PHOSPHORIBOSYLTRANSFERASE 1-RELATED"/>
    <property type="match status" value="1"/>
</dbReference>
<dbReference type="Pfam" id="PF00156">
    <property type="entry name" value="Pribosyltran"/>
    <property type="match status" value="1"/>
</dbReference>
<dbReference type="SUPFAM" id="SSF53271">
    <property type="entry name" value="PRTase-like"/>
    <property type="match status" value="1"/>
</dbReference>
<feature type="chain" id="PRO_1000066290" description="Orotate phosphoribosyltransferase">
    <location>
        <begin position="1"/>
        <end position="212"/>
    </location>
</feature>
<feature type="binding site" description="in other chain" evidence="1">
    <location>
        <position position="26"/>
    </location>
    <ligand>
        <name>5-phospho-alpha-D-ribose 1-diphosphate</name>
        <dbReference type="ChEBI" id="CHEBI:58017"/>
        <note>ligand shared between dimeric partners</note>
    </ligand>
</feature>
<feature type="binding site" evidence="1">
    <location>
        <begin position="34"/>
        <end position="35"/>
    </location>
    <ligand>
        <name>orotate</name>
        <dbReference type="ChEBI" id="CHEBI:30839"/>
    </ligand>
</feature>
<feature type="binding site" description="in other chain" evidence="1">
    <location>
        <begin position="72"/>
        <end position="73"/>
    </location>
    <ligand>
        <name>5-phospho-alpha-D-ribose 1-diphosphate</name>
        <dbReference type="ChEBI" id="CHEBI:58017"/>
        <note>ligand shared between dimeric partners</note>
    </ligand>
</feature>
<feature type="binding site" evidence="1">
    <location>
        <position position="99"/>
    </location>
    <ligand>
        <name>5-phospho-alpha-D-ribose 1-diphosphate</name>
        <dbReference type="ChEBI" id="CHEBI:58017"/>
        <note>ligand shared between dimeric partners</note>
    </ligand>
</feature>
<feature type="binding site" description="in other chain" evidence="1">
    <location>
        <position position="100"/>
    </location>
    <ligand>
        <name>5-phospho-alpha-D-ribose 1-diphosphate</name>
        <dbReference type="ChEBI" id="CHEBI:58017"/>
        <note>ligand shared between dimeric partners</note>
    </ligand>
</feature>
<feature type="binding site" evidence="1">
    <location>
        <position position="103"/>
    </location>
    <ligand>
        <name>5-phospho-alpha-D-ribose 1-diphosphate</name>
        <dbReference type="ChEBI" id="CHEBI:58017"/>
        <note>ligand shared between dimeric partners</note>
    </ligand>
</feature>
<feature type="binding site" evidence="1">
    <location>
        <position position="105"/>
    </location>
    <ligand>
        <name>5-phospho-alpha-D-ribose 1-diphosphate</name>
        <dbReference type="ChEBI" id="CHEBI:58017"/>
        <note>ligand shared between dimeric partners</note>
    </ligand>
</feature>
<feature type="binding site" description="in other chain" evidence="1">
    <location>
        <begin position="124"/>
        <end position="132"/>
    </location>
    <ligand>
        <name>5-phospho-alpha-D-ribose 1-diphosphate</name>
        <dbReference type="ChEBI" id="CHEBI:58017"/>
        <note>ligand shared between dimeric partners</note>
    </ligand>
</feature>
<feature type="binding site" evidence="1">
    <location>
        <position position="128"/>
    </location>
    <ligand>
        <name>orotate</name>
        <dbReference type="ChEBI" id="CHEBI:30839"/>
    </ligand>
</feature>
<feature type="binding site" evidence="1">
    <location>
        <position position="156"/>
    </location>
    <ligand>
        <name>orotate</name>
        <dbReference type="ChEBI" id="CHEBI:30839"/>
    </ligand>
</feature>
<sequence>MKQYQKDFVDFMLGSGALKFGEFTLKSGRVSPYFFNTGAFNTGQHLSQLGKFYATAIENSILDFDVLFGLAYKGIPLVTATTIALNDGFSKNVPYSFNRKEVKIHGEGGDIVGHQLEGNILIIDDVITVGTAIIEAMSIIKANGATAKGVIVAVDRQEKGKGEQSTIQEVEQNFGLSVLSIINLSHLVDYLKQGNDHALIERIEVYRDCYGV</sequence>
<protein>
    <recommendedName>
        <fullName evidence="1">Orotate phosphoribosyltransferase</fullName>
        <shortName evidence="1">OPRT</shortName>
        <shortName evidence="1">OPRTase</shortName>
        <ecNumber evidence="1">2.4.2.10</ecNumber>
    </recommendedName>
</protein>
<gene>
    <name evidence="1" type="primary">pyrE</name>
    <name type="ordered locus">Rmag_0995</name>
</gene>
<evidence type="ECO:0000255" key="1">
    <source>
        <dbReference type="HAMAP-Rule" id="MF_01208"/>
    </source>
</evidence>